<gene>
    <name type="primary">rbfox2</name>
    <name type="synonym">fox2</name>
    <name type="synonym">rbm9</name>
</gene>
<protein>
    <recommendedName>
        <fullName>RNA binding protein fox-1 homolog 2</fullName>
    </recommendedName>
    <alternativeName>
        <fullName>Fox-1 homolog B</fullName>
    </alternativeName>
    <alternativeName>
        <fullName>RNA-binding motif protein 9</fullName>
    </alternativeName>
    <alternativeName>
        <fullName>RNA-binding protein 9</fullName>
    </alternativeName>
</protein>
<keyword id="KW-0963">Cytoplasm</keyword>
<keyword id="KW-0507">mRNA processing</keyword>
<keyword id="KW-0508">mRNA splicing</keyword>
<keyword id="KW-0539">Nucleus</keyword>
<keyword id="KW-1185">Reference proteome</keyword>
<keyword id="KW-0694">RNA-binding</keyword>
<proteinExistence type="evidence at transcript level"/>
<accession>Q66JB7</accession>
<name>RFOX2_XENTR</name>
<dbReference type="EMBL" id="BC080984">
    <property type="protein sequence ID" value="AAH80984.1"/>
    <property type="molecule type" value="mRNA"/>
</dbReference>
<dbReference type="RefSeq" id="NP_001008085.1">
    <property type="nucleotide sequence ID" value="NM_001008084.1"/>
</dbReference>
<dbReference type="SMR" id="Q66JB7"/>
<dbReference type="FunCoup" id="Q66JB7">
    <property type="interactions" value="2492"/>
</dbReference>
<dbReference type="STRING" id="8364.ENSXETP00000009557"/>
<dbReference type="PaxDb" id="8364-ENSXETP00000043659"/>
<dbReference type="DNASU" id="493447"/>
<dbReference type="GeneID" id="493447"/>
<dbReference type="KEGG" id="xtr:493447"/>
<dbReference type="AGR" id="Xenbase:XB-GENE-489991"/>
<dbReference type="CTD" id="23543"/>
<dbReference type="Xenbase" id="XB-GENE-489991">
    <property type="gene designation" value="rbfox2"/>
</dbReference>
<dbReference type="eggNOG" id="KOG0125">
    <property type="taxonomic scope" value="Eukaryota"/>
</dbReference>
<dbReference type="HOGENOM" id="CLU_048440_0_1_1"/>
<dbReference type="InParanoid" id="Q66JB7"/>
<dbReference type="OrthoDB" id="5382468at2759"/>
<dbReference type="Proteomes" id="UP000008143">
    <property type="component" value="Chromosome 4"/>
</dbReference>
<dbReference type="Bgee" id="ENSXETG00000000231">
    <property type="expression patterns" value="Expressed in neurula embryo and 12 other cell types or tissues"/>
</dbReference>
<dbReference type="ExpressionAtlas" id="Q66JB7">
    <property type="expression patterns" value="baseline"/>
</dbReference>
<dbReference type="GO" id="GO:0005737">
    <property type="term" value="C:cytoplasm"/>
    <property type="evidence" value="ECO:0007669"/>
    <property type="project" value="UniProtKB-SubCell"/>
</dbReference>
<dbReference type="GO" id="GO:0005634">
    <property type="term" value="C:nucleus"/>
    <property type="evidence" value="ECO:0007669"/>
    <property type="project" value="UniProtKB-SubCell"/>
</dbReference>
<dbReference type="GO" id="GO:0003723">
    <property type="term" value="F:RNA binding"/>
    <property type="evidence" value="ECO:0007669"/>
    <property type="project" value="UniProtKB-KW"/>
</dbReference>
<dbReference type="GO" id="GO:0006397">
    <property type="term" value="P:mRNA processing"/>
    <property type="evidence" value="ECO:0007669"/>
    <property type="project" value="UniProtKB-KW"/>
</dbReference>
<dbReference type="GO" id="GO:0007399">
    <property type="term" value="P:nervous system development"/>
    <property type="evidence" value="ECO:0007669"/>
    <property type="project" value="InterPro"/>
</dbReference>
<dbReference type="GO" id="GO:0000381">
    <property type="term" value="P:regulation of alternative mRNA splicing, via spliceosome"/>
    <property type="evidence" value="ECO:0007669"/>
    <property type="project" value="InterPro"/>
</dbReference>
<dbReference type="GO" id="GO:0008380">
    <property type="term" value="P:RNA splicing"/>
    <property type="evidence" value="ECO:0007669"/>
    <property type="project" value="UniProtKB-KW"/>
</dbReference>
<dbReference type="CDD" id="cd12407">
    <property type="entry name" value="RRM_FOX1_like"/>
    <property type="match status" value="1"/>
</dbReference>
<dbReference type="FunFam" id="3.30.70.330:FF:000004">
    <property type="entry name" value="RNA binding fox-1 homolog 1"/>
    <property type="match status" value="1"/>
</dbReference>
<dbReference type="Gene3D" id="3.30.70.330">
    <property type="match status" value="1"/>
</dbReference>
<dbReference type="InterPro" id="IPR025670">
    <property type="entry name" value="Fox-1_C_dom"/>
</dbReference>
<dbReference type="InterPro" id="IPR034237">
    <property type="entry name" value="FOX1_RRM"/>
</dbReference>
<dbReference type="InterPro" id="IPR012677">
    <property type="entry name" value="Nucleotide-bd_a/b_plait_sf"/>
</dbReference>
<dbReference type="InterPro" id="IPR035979">
    <property type="entry name" value="RBD_domain_sf"/>
</dbReference>
<dbReference type="InterPro" id="IPR017325">
    <property type="entry name" value="RBFOX1-3"/>
</dbReference>
<dbReference type="InterPro" id="IPR047131">
    <property type="entry name" value="RBFOX1-like"/>
</dbReference>
<dbReference type="InterPro" id="IPR000504">
    <property type="entry name" value="RRM_dom"/>
</dbReference>
<dbReference type="PANTHER" id="PTHR15597">
    <property type="entry name" value="ATAXIN 2-BINDING PROTEIN 1-RELATED"/>
    <property type="match status" value="1"/>
</dbReference>
<dbReference type="PANTHER" id="PTHR15597:SF31">
    <property type="entry name" value="RNA BINDING PROTEIN FOX-1 HOMOLOG 2"/>
    <property type="match status" value="1"/>
</dbReference>
<dbReference type="Pfam" id="PF12414">
    <property type="entry name" value="Fox-1_C"/>
    <property type="match status" value="1"/>
</dbReference>
<dbReference type="Pfam" id="PF00076">
    <property type="entry name" value="RRM_1"/>
    <property type="match status" value="1"/>
</dbReference>
<dbReference type="PIRSF" id="PIRSF037932">
    <property type="entry name" value="Ataxin_2_bd_A2BP"/>
    <property type="match status" value="1"/>
</dbReference>
<dbReference type="SMART" id="SM00360">
    <property type="entry name" value="RRM"/>
    <property type="match status" value="1"/>
</dbReference>
<dbReference type="SUPFAM" id="SSF54928">
    <property type="entry name" value="RNA-binding domain, RBD"/>
    <property type="match status" value="1"/>
</dbReference>
<dbReference type="PROSITE" id="PS50102">
    <property type="entry name" value="RRM"/>
    <property type="match status" value="1"/>
</dbReference>
<evidence type="ECO:0000250" key="1"/>
<evidence type="ECO:0000255" key="2">
    <source>
        <dbReference type="PROSITE-ProRule" id="PRU00176"/>
    </source>
</evidence>
<evidence type="ECO:0000256" key="3">
    <source>
        <dbReference type="SAM" id="MobiDB-lite"/>
    </source>
</evidence>
<feature type="chain" id="PRO_0000317118" description="RNA binding protein fox-1 homolog 2">
    <location>
        <begin position="1"/>
        <end position="380"/>
    </location>
</feature>
<feature type="domain" description="RRM" evidence="2">
    <location>
        <begin position="110"/>
        <end position="186"/>
    </location>
</feature>
<feature type="region of interest" description="Disordered" evidence="3">
    <location>
        <begin position="1"/>
        <end position="117"/>
    </location>
</feature>
<feature type="compositionally biased region" description="Polar residues" evidence="3">
    <location>
        <begin position="1"/>
        <end position="20"/>
    </location>
</feature>
<feature type="compositionally biased region" description="Polar residues" evidence="3">
    <location>
        <begin position="36"/>
        <end position="56"/>
    </location>
</feature>
<feature type="compositionally biased region" description="Low complexity" evidence="3">
    <location>
        <begin position="72"/>
        <end position="102"/>
    </location>
</feature>
<feature type="site" description="Interaction with RNA" evidence="1">
    <location>
        <position position="111"/>
    </location>
</feature>
<feature type="site" description="Interaction with RNA" evidence="1">
    <location>
        <position position="119"/>
    </location>
</feature>
<feature type="site" description="Interaction with RNA" evidence="1">
    <location>
        <position position="120"/>
    </location>
</feature>
<feature type="site" description="Interaction with RNA" evidence="1">
    <location>
        <position position="144"/>
    </location>
</feature>
<feature type="site" description="Interaction with RNA" evidence="1">
    <location>
        <position position="149"/>
    </location>
</feature>
<feature type="site" description="Interaction with RNA" evidence="1">
    <location>
        <position position="153"/>
    </location>
</feature>
<feature type="site" description="Interaction with RNA" evidence="1">
    <location>
        <position position="177"/>
    </location>
</feature>
<feature type="site" description="Interaction with RNA" evidence="1">
    <location>
        <position position="187"/>
    </location>
</feature>
<sequence length="380" mass="40211">MEKNKMVSQGNQEPTATPDTMVQPFAAIPFPPPPQNGLSTDYGSQHTQEYATQSTEHGIPLYGGGQSHAEHSTPATSTANASSTTDGSQTEGQQSQTQNSENSESKPTPKRLHVSNIPFRFRDPDLRQMFGQFGKILDVEIIFNERGSKGFGFVTFETSADADRAREKLHSTVVEGRKIEVNNATARVMTNKKSVTPYGNGWKLSPVVGAVYGPELYAAAPGLQADVSLATEAGVPLPGPRGVNTYIPLIIPGFPYPTAAAAATTAAAFRGAHLRGRGRTVYGAVRAVPPTAIPTYPGVLYQDGFYGTELYGGYAAYRYTQPATAATAATAAAAAAAAYSDGYGRVYTADPYHALAPATSYGVGAVASLYRGGYSRFAPY</sequence>
<reference key="1">
    <citation type="submission" date="2004-08" db="EMBL/GenBank/DDBJ databases">
        <authorList>
            <consortium name="NIH - Xenopus Gene Collection (XGC) project"/>
        </authorList>
    </citation>
    <scope>NUCLEOTIDE SEQUENCE [LARGE SCALE MRNA]</scope>
    <source>
        <tissue>Embryo</tissue>
    </source>
</reference>
<organism>
    <name type="scientific">Xenopus tropicalis</name>
    <name type="common">Western clawed frog</name>
    <name type="synonym">Silurana tropicalis</name>
    <dbReference type="NCBI Taxonomy" id="8364"/>
    <lineage>
        <taxon>Eukaryota</taxon>
        <taxon>Metazoa</taxon>
        <taxon>Chordata</taxon>
        <taxon>Craniata</taxon>
        <taxon>Vertebrata</taxon>
        <taxon>Euteleostomi</taxon>
        <taxon>Amphibia</taxon>
        <taxon>Batrachia</taxon>
        <taxon>Anura</taxon>
        <taxon>Pipoidea</taxon>
        <taxon>Pipidae</taxon>
        <taxon>Xenopodinae</taxon>
        <taxon>Xenopus</taxon>
        <taxon>Silurana</taxon>
    </lineage>
</organism>
<comment type="function">
    <text evidence="1">RNA-binding protein that regulates alternative splicing events by binding to 5'-UGCAUGU-3' elements. Regulates alternative splicing of tissue-specific exons (By similarity).</text>
</comment>
<comment type="subcellular location">
    <subcellularLocation>
        <location evidence="1">Nucleus</location>
    </subcellularLocation>
    <subcellularLocation>
        <location evidence="1">Cytoplasm</location>
    </subcellularLocation>
</comment>